<dbReference type="EMBL" id="M15677">
    <property type="protein sequence ID" value="AAA23523.1"/>
    <property type="molecule type" value="Genomic_DNA"/>
</dbReference>
<dbReference type="PIR" id="A27165">
    <property type="entry name" value="HMECBM"/>
</dbReference>
<dbReference type="RefSeq" id="WP_001049524.1">
    <property type="nucleotide sequence ID" value="NZ_VTOR01000021.1"/>
</dbReference>
<organism>
    <name type="scientific">Escherichia coli</name>
    <dbReference type="NCBI Taxonomy" id="562"/>
    <lineage>
        <taxon>Bacteria</taxon>
        <taxon>Pseudomonadati</taxon>
        <taxon>Pseudomonadota</taxon>
        <taxon>Gammaproteobacteria</taxon>
        <taxon>Enterobacterales</taxon>
        <taxon>Enterobacteriaceae</taxon>
        <taxon>Escherichia</taxon>
    </lineage>
</organism>
<name>BMAE_ECOLX</name>
<comment type="function">
    <text>This protein is a non-fimbrial hemagglutinin that is specific for blood group M.</text>
</comment>
<proteinExistence type="predicted"/>
<sequence length="170" mass="17952">MNLKKIAIASSVFAGITMALTCHAVTVTATHTVESDAEFTIDWVDAGPTTTDAKDGEVWGHLDMTQTRGTPTFGKLRNPQGETSPGPLKAPFSFTGPDGHTARAYLDSYGAPIHNYAGDNLANGVKVGSGSGNTPFVVGTASRLTARIFGDQTLVPGVYRTTFELTTWTD</sequence>
<protein>
    <recommendedName>
        <fullName>M-agglutinin</fullName>
    </recommendedName>
</protein>
<accession>P05818</accession>
<keyword id="KW-0348">Hemagglutinin</keyword>
<keyword id="KW-0732">Signal</keyword>
<gene>
    <name type="primary">bmaE</name>
</gene>
<reference key="1">
    <citation type="journal article" date="1986" name="Gene">
        <title>Organization of genes expressing the blood-group-M-specific hemagglutinin of Escherichia coli: identification and nucleotide sequence of the M-agglutinin subunit gene.</title>
        <authorList>
            <person name="Rhen M."/>
            <person name="Vaeisaenen-Rhen V."/>
            <person name="Saraste M."/>
            <person name="Korhonen T.K."/>
        </authorList>
    </citation>
    <scope>NUCLEOTIDE SEQUENCE [GENOMIC DNA]</scope>
</reference>
<feature type="signal peptide">
    <location>
        <begin position="1"/>
        <end position="24"/>
    </location>
</feature>
<feature type="chain" id="PRO_0000020819" description="M-agglutinin">
    <location>
        <begin position="25"/>
        <end position="170"/>
    </location>
</feature>